<accession>Q3MB78</accession>
<dbReference type="EC" id="1.10.3.9" evidence="1"/>
<dbReference type="EMBL" id="CP000117">
    <property type="protein sequence ID" value="ABA21758.1"/>
    <property type="molecule type" value="Genomic_DNA"/>
</dbReference>
<dbReference type="SMR" id="Q3MB78"/>
<dbReference type="STRING" id="240292.Ava_2138"/>
<dbReference type="KEGG" id="ava:Ava_2138"/>
<dbReference type="eggNOG" id="ENOG502Z87P">
    <property type="taxonomic scope" value="Bacteria"/>
</dbReference>
<dbReference type="HOGENOM" id="CLU_054206_1_0_3"/>
<dbReference type="Proteomes" id="UP000002533">
    <property type="component" value="Chromosome"/>
</dbReference>
<dbReference type="GO" id="GO:0009523">
    <property type="term" value="C:photosystem II"/>
    <property type="evidence" value="ECO:0007669"/>
    <property type="project" value="UniProtKB-KW"/>
</dbReference>
<dbReference type="GO" id="GO:0031676">
    <property type="term" value="C:plasma membrane-derived thylakoid membrane"/>
    <property type="evidence" value="ECO:0007669"/>
    <property type="project" value="UniProtKB-SubCell"/>
</dbReference>
<dbReference type="GO" id="GO:0016168">
    <property type="term" value="F:chlorophyll binding"/>
    <property type="evidence" value="ECO:0007669"/>
    <property type="project" value="UniProtKB-UniRule"/>
</dbReference>
<dbReference type="GO" id="GO:0045156">
    <property type="term" value="F:electron transporter, transferring electrons within the cyclic electron transport pathway of photosynthesis activity"/>
    <property type="evidence" value="ECO:0007669"/>
    <property type="project" value="InterPro"/>
</dbReference>
<dbReference type="GO" id="GO:0005506">
    <property type="term" value="F:iron ion binding"/>
    <property type="evidence" value="ECO:0007669"/>
    <property type="project" value="UniProtKB-UniRule"/>
</dbReference>
<dbReference type="GO" id="GO:0016682">
    <property type="term" value="F:oxidoreductase activity, acting on diphenols and related substances as donors, oxygen as acceptor"/>
    <property type="evidence" value="ECO:0007669"/>
    <property type="project" value="UniProtKB-UniRule"/>
</dbReference>
<dbReference type="GO" id="GO:0010242">
    <property type="term" value="F:oxygen evolving activity"/>
    <property type="evidence" value="ECO:0007669"/>
    <property type="project" value="UniProtKB-EC"/>
</dbReference>
<dbReference type="GO" id="GO:0009772">
    <property type="term" value="P:photosynthetic electron transport in photosystem II"/>
    <property type="evidence" value="ECO:0007669"/>
    <property type="project" value="InterPro"/>
</dbReference>
<dbReference type="GO" id="GO:0009635">
    <property type="term" value="P:response to herbicide"/>
    <property type="evidence" value="ECO:0007669"/>
    <property type="project" value="UniProtKB-KW"/>
</dbReference>
<dbReference type="CDD" id="cd09289">
    <property type="entry name" value="Photosystem-II_D1"/>
    <property type="match status" value="1"/>
</dbReference>
<dbReference type="FunFam" id="1.20.85.10:FF:000002">
    <property type="entry name" value="Photosystem II protein D1"/>
    <property type="match status" value="1"/>
</dbReference>
<dbReference type="Gene3D" id="1.20.85.10">
    <property type="entry name" value="Photosystem II protein D1-like"/>
    <property type="match status" value="2"/>
</dbReference>
<dbReference type="HAMAP" id="MF_01379">
    <property type="entry name" value="PSII_PsbA_D1"/>
    <property type="match status" value="1"/>
</dbReference>
<dbReference type="InterPro" id="IPR055266">
    <property type="entry name" value="D1/D2"/>
</dbReference>
<dbReference type="InterPro" id="IPR036854">
    <property type="entry name" value="Photo_II_D1/D2_sf"/>
</dbReference>
<dbReference type="InterPro" id="IPR000484">
    <property type="entry name" value="Photo_RC_L/M"/>
</dbReference>
<dbReference type="InterPro" id="IPR055265">
    <property type="entry name" value="Photo_RC_L/M_CS"/>
</dbReference>
<dbReference type="InterPro" id="IPR005867">
    <property type="entry name" value="PSII_D1"/>
</dbReference>
<dbReference type="NCBIfam" id="TIGR01151">
    <property type="entry name" value="psbA"/>
    <property type="match status" value="1"/>
</dbReference>
<dbReference type="PANTHER" id="PTHR33149:SF12">
    <property type="entry name" value="PHOTOSYSTEM II D2 PROTEIN"/>
    <property type="match status" value="1"/>
</dbReference>
<dbReference type="PANTHER" id="PTHR33149">
    <property type="entry name" value="PHOTOSYSTEM II PROTEIN D1"/>
    <property type="match status" value="1"/>
</dbReference>
<dbReference type="Pfam" id="PF00124">
    <property type="entry name" value="Photo_RC"/>
    <property type="match status" value="1"/>
</dbReference>
<dbReference type="PRINTS" id="PR00256">
    <property type="entry name" value="REACTNCENTRE"/>
</dbReference>
<dbReference type="SUPFAM" id="SSF81483">
    <property type="entry name" value="Bacterial photosystem II reaction centre, L and M subunits"/>
    <property type="match status" value="1"/>
</dbReference>
<dbReference type="PROSITE" id="PS00244">
    <property type="entry name" value="REACTION_CENTER"/>
    <property type="match status" value="1"/>
</dbReference>
<proteinExistence type="inferred from homology"/>
<reference key="1">
    <citation type="journal article" date="2014" name="Stand. Genomic Sci.">
        <title>Complete genome sequence of Anabaena variabilis ATCC 29413.</title>
        <authorList>
            <person name="Thiel T."/>
            <person name="Pratte B.S."/>
            <person name="Zhong J."/>
            <person name="Goodwin L."/>
            <person name="Copeland A."/>
            <person name="Lucas S."/>
            <person name="Han C."/>
            <person name="Pitluck S."/>
            <person name="Land M.L."/>
            <person name="Kyrpides N.C."/>
            <person name="Woyke T."/>
        </authorList>
    </citation>
    <scope>NUCLEOTIDE SEQUENCE [LARGE SCALE GENOMIC DNA]</scope>
    <source>
        <strain>ATCC 29413 / PCC 7937</strain>
    </source>
</reference>
<evidence type="ECO:0000255" key="1">
    <source>
        <dbReference type="HAMAP-Rule" id="MF_01379"/>
    </source>
</evidence>
<evidence type="ECO:0000305" key="2"/>
<feature type="chain" id="PRO_0000316340" description="Photosystem II protein D1 3">
    <location>
        <begin position="1"/>
        <end position="344"/>
    </location>
</feature>
<feature type="propeptide" id="PRO_0000316341" evidence="1">
    <location>
        <begin position="345"/>
        <end position="360"/>
    </location>
</feature>
<feature type="transmembrane region" description="Helical" evidence="1">
    <location>
        <begin position="29"/>
        <end position="46"/>
    </location>
</feature>
<feature type="transmembrane region" description="Helical" evidence="1">
    <location>
        <begin position="118"/>
        <end position="133"/>
    </location>
</feature>
<feature type="transmembrane region" description="Helical" evidence="1">
    <location>
        <begin position="142"/>
        <end position="156"/>
    </location>
</feature>
<feature type="transmembrane region" description="Helical" evidence="1">
    <location>
        <begin position="197"/>
        <end position="218"/>
    </location>
</feature>
<feature type="transmembrane region" description="Helical" evidence="1">
    <location>
        <begin position="274"/>
        <end position="288"/>
    </location>
</feature>
<feature type="binding site" description="axial binding residue" evidence="1">
    <location>
        <position position="118"/>
    </location>
    <ligand>
        <name>chlorophyll a</name>
        <dbReference type="ChEBI" id="CHEBI:58416"/>
        <label>ChlzD1</label>
    </ligand>
    <ligandPart>
        <name>Mg</name>
        <dbReference type="ChEBI" id="CHEBI:25107"/>
    </ligandPart>
</feature>
<feature type="binding site" evidence="1">
    <location>
        <position position="126"/>
    </location>
    <ligand>
        <name>pheophytin a</name>
        <dbReference type="ChEBI" id="CHEBI:136840"/>
        <label>D1</label>
    </ligand>
</feature>
<feature type="binding site" evidence="1">
    <location>
        <position position="170"/>
    </location>
    <ligand>
        <name>[CaMn4O5] cluster</name>
        <dbReference type="ChEBI" id="CHEBI:189552"/>
    </ligand>
</feature>
<feature type="binding site" evidence="1">
    <location>
        <position position="189"/>
    </location>
    <ligand>
        <name>[CaMn4O5] cluster</name>
        <dbReference type="ChEBI" id="CHEBI:189552"/>
    </ligand>
</feature>
<feature type="binding site" description="axial binding residue" evidence="1">
    <location>
        <position position="198"/>
    </location>
    <ligand>
        <name>chlorophyll a</name>
        <dbReference type="ChEBI" id="CHEBI:58416"/>
        <label>PD1</label>
    </ligand>
    <ligandPart>
        <name>Mg</name>
        <dbReference type="ChEBI" id="CHEBI:25107"/>
    </ligandPart>
</feature>
<feature type="binding site" evidence="1">
    <location>
        <position position="215"/>
    </location>
    <ligand>
        <name>a quinone</name>
        <dbReference type="ChEBI" id="CHEBI:132124"/>
        <label>B</label>
    </ligand>
</feature>
<feature type="binding site" evidence="1">
    <location>
        <position position="215"/>
    </location>
    <ligand>
        <name>Fe cation</name>
        <dbReference type="ChEBI" id="CHEBI:24875"/>
        <note>ligand shared with heterodimeric partner</note>
    </ligand>
</feature>
<feature type="binding site" evidence="1">
    <location>
        <begin position="264"/>
        <end position="265"/>
    </location>
    <ligand>
        <name>a quinone</name>
        <dbReference type="ChEBI" id="CHEBI:132124"/>
        <label>B</label>
    </ligand>
</feature>
<feature type="binding site" evidence="1">
    <location>
        <position position="272"/>
    </location>
    <ligand>
        <name>Fe cation</name>
        <dbReference type="ChEBI" id="CHEBI:24875"/>
        <note>ligand shared with heterodimeric partner</note>
    </ligand>
</feature>
<feature type="binding site" evidence="1">
    <location>
        <position position="332"/>
    </location>
    <ligand>
        <name>[CaMn4O5] cluster</name>
        <dbReference type="ChEBI" id="CHEBI:189552"/>
    </ligand>
</feature>
<feature type="binding site" evidence="1">
    <location>
        <position position="333"/>
    </location>
    <ligand>
        <name>[CaMn4O5] cluster</name>
        <dbReference type="ChEBI" id="CHEBI:189552"/>
    </ligand>
</feature>
<feature type="binding site" evidence="1">
    <location>
        <position position="342"/>
    </location>
    <ligand>
        <name>[CaMn4O5] cluster</name>
        <dbReference type="ChEBI" id="CHEBI:189552"/>
    </ligand>
</feature>
<feature type="binding site" evidence="1">
    <location>
        <position position="344"/>
    </location>
    <ligand>
        <name>[CaMn4O5] cluster</name>
        <dbReference type="ChEBI" id="CHEBI:189552"/>
    </ligand>
</feature>
<feature type="site" description="Tyrosine radical intermediate" evidence="1">
    <location>
        <position position="161"/>
    </location>
</feature>
<feature type="site" description="Stabilizes free radical intermediate" evidence="1">
    <location>
        <position position="190"/>
    </location>
</feature>
<feature type="site" description="Cleavage; by CtpA" evidence="1">
    <location>
        <begin position="344"/>
        <end position="345"/>
    </location>
</feature>
<organism>
    <name type="scientific">Trichormus variabilis (strain ATCC 29413 / PCC 7937)</name>
    <name type="common">Anabaena variabilis</name>
    <dbReference type="NCBI Taxonomy" id="240292"/>
    <lineage>
        <taxon>Bacteria</taxon>
        <taxon>Bacillati</taxon>
        <taxon>Cyanobacteriota</taxon>
        <taxon>Cyanophyceae</taxon>
        <taxon>Nostocales</taxon>
        <taxon>Nostocaceae</taxon>
        <taxon>Trichormus</taxon>
    </lineage>
</organism>
<name>PSBA3_TRIV2</name>
<keyword id="KW-0106">Calcium</keyword>
<keyword id="KW-0148">Chlorophyll</keyword>
<keyword id="KW-0157">Chromophore</keyword>
<keyword id="KW-0249">Electron transport</keyword>
<keyword id="KW-0359">Herbicide resistance</keyword>
<keyword id="KW-0408">Iron</keyword>
<keyword id="KW-0460">Magnesium</keyword>
<keyword id="KW-0464">Manganese</keyword>
<keyword id="KW-0472">Membrane</keyword>
<keyword id="KW-0479">Metal-binding</keyword>
<keyword id="KW-0560">Oxidoreductase</keyword>
<keyword id="KW-0602">Photosynthesis</keyword>
<keyword id="KW-0604">Photosystem II</keyword>
<keyword id="KW-0793">Thylakoid</keyword>
<keyword id="KW-0812">Transmembrane</keyword>
<keyword id="KW-1133">Transmembrane helix</keyword>
<keyword id="KW-0813">Transport</keyword>
<sequence length="360" mass="39645">MTTTLQQRSSANVWERFCTWITSTENRIYVGWFGVLMIPTLLAATVCFIIAFVAAPPVDIDGIREPVAGSLIYGNNIISGAVVPSSNAIGLHFYPIWEAASLDEWLYNGGPYQLVVFHFLIGCACYLGRQWELSYRLGMRPWICVAYSAPLASATAVFLIYPIGQGSFSDGMPLGISGTFNFMIVFQAEHNILMHPFHMLGVAGVFGGSLFSAMHGSLVTSSLVRETTEVESQNYGYKFGQEEETYNIVAAHGYFGRLIFQYASFNNSRQLHFFLAAWPVIGIWFTALGVSTMAFNLNGFNFNQSIIDSQGRVINTWADIINRANLGMEVMHERNAHNFPLDLAAGEVAPVALTAPAING</sequence>
<gene>
    <name evidence="1 2" type="primary">psbA3</name>
    <name type="ordered locus">Ava_2138</name>
</gene>
<protein>
    <recommendedName>
        <fullName evidence="1">Photosystem II protein D1 3</fullName>
        <shortName evidence="1">PSII D1 protein 3</shortName>
        <ecNumber evidence="1">1.10.3.9</ecNumber>
    </recommendedName>
    <alternativeName>
        <fullName evidence="1">Photosystem II Q(B) protein 3</fullName>
    </alternativeName>
</protein>
<comment type="function">
    <text evidence="1">Photosystem II (PSII) is a light-driven water:plastoquinone oxidoreductase that uses light energy to abstract electrons from H(2)O, generating O(2) and a proton gradient subsequently used for ATP formation. It consists of a core antenna complex that captures photons, and an electron transfer chain that converts photonic excitation into a charge separation. The D1/D2 (PsbA/PsbD) reaction center heterodimer binds P680, the primary electron donor of PSII as well as several subsequent electron acceptors.</text>
</comment>
<comment type="catalytic activity">
    <reaction evidence="1">
        <text>2 a plastoquinone + 4 hnu + 2 H2O = 2 a plastoquinol + O2</text>
        <dbReference type="Rhea" id="RHEA:36359"/>
        <dbReference type="Rhea" id="RHEA-COMP:9561"/>
        <dbReference type="Rhea" id="RHEA-COMP:9562"/>
        <dbReference type="ChEBI" id="CHEBI:15377"/>
        <dbReference type="ChEBI" id="CHEBI:15379"/>
        <dbReference type="ChEBI" id="CHEBI:17757"/>
        <dbReference type="ChEBI" id="CHEBI:30212"/>
        <dbReference type="ChEBI" id="CHEBI:62192"/>
        <dbReference type="EC" id="1.10.3.9"/>
    </reaction>
</comment>
<comment type="cofactor">
    <text evidence="1">The D1/D2 heterodimer binds P680, chlorophylls that are the primary electron donor of PSII, and subsequent electron acceptors. It shares a non-heme iron and each subunit binds pheophytin, quinone, additional chlorophylls, carotenoids and lipids. D1 provides most of the ligands for the Mn4-Ca-O5 cluster of the oxygen-evolving complex (OEC). There is also a Cl(-1) ion associated with D1 and D2, which is required for oxygen evolution. The PSII complex binds additional chlorophylls, carotenoids and specific lipids.</text>
</comment>
<comment type="subunit">
    <text evidence="1">PSII is composed of 1 copy each of membrane proteins PsbA, PsbB, PsbC, PsbD, PsbE, PsbF, PsbH, PsbI, PsbJ, PsbK, PsbL, PsbM, PsbT, PsbX, PsbY, PsbZ, Psb30/Ycf12, peripheral proteins PsbO, CyanoQ (PsbQ), PsbU, PsbV and a large number of cofactors. It forms dimeric complexes.</text>
</comment>
<comment type="subcellular location">
    <subcellularLocation>
        <location evidence="1">Cellular thylakoid membrane</location>
        <topology evidence="1">Multi-pass membrane protein</topology>
    </subcellularLocation>
</comment>
<comment type="PTM">
    <text evidence="1">Tyr-161 forms a radical intermediate that is referred to as redox-active TyrZ, YZ or Y-Z.</text>
</comment>
<comment type="PTM">
    <text evidence="1">C-terminally processed by CtpA; processing is essential to allow assembly of the oxygen-evolving complex and thus photosynthetic growth.</text>
</comment>
<comment type="miscellaneous">
    <text evidence="1">Cyanobacteria usually contain more than 2 copies of the psbA gene.</text>
</comment>
<comment type="miscellaneous">
    <text evidence="1">2 of the reaction center chlorophylls (ChlD1 and ChlD2) are entirely coordinated by water.</text>
</comment>
<comment type="miscellaneous">
    <text evidence="1">Herbicides such as atrazine, BNT, diuron or ioxynil bind in the Q(B) binding site and block subsequent electron transfer.</text>
</comment>
<comment type="similarity">
    <text evidence="1">Belongs to the reaction center PufL/M/PsbA/D family.</text>
</comment>